<organism>
    <name type="scientific">Xenopus laevis</name>
    <name type="common">African clawed frog</name>
    <dbReference type="NCBI Taxonomy" id="8355"/>
    <lineage>
        <taxon>Eukaryota</taxon>
        <taxon>Metazoa</taxon>
        <taxon>Chordata</taxon>
        <taxon>Craniata</taxon>
        <taxon>Vertebrata</taxon>
        <taxon>Euteleostomi</taxon>
        <taxon>Amphibia</taxon>
        <taxon>Batrachia</taxon>
        <taxon>Anura</taxon>
        <taxon>Pipoidea</taxon>
        <taxon>Pipidae</taxon>
        <taxon>Xenopodinae</taxon>
        <taxon>Xenopus</taxon>
        <taxon>Xenopus</taxon>
    </lineage>
</organism>
<name>B3G5B_XENLA</name>
<proteinExistence type="evidence at transcript level"/>
<reference key="1">
    <citation type="submission" date="2004-07" db="EMBL/GenBank/DDBJ databases">
        <authorList>
            <consortium name="NIH - Xenopus Gene Collection (XGC) project"/>
        </authorList>
    </citation>
    <scope>NUCLEOTIDE SEQUENCE [LARGE SCALE MRNA]</scope>
    <source>
        <tissue>Ovary</tissue>
    </source>
</reference>
<evidence type="ECO:0000250" key="1"/>
<evidence type="ECO:0000250" key="2">
    <source>
        <dbReference type="UniProtKB" id="Q8BGY6"/>
    </source>
</evidence>
<evidence type="ECO:0000250" key="3">
    <source>
        <dbReference type="UniProtKB" id="Q9BYG0"/>
    </source>
</evidence>
<evidence type="ECO:0000255" key="4"/>
<evidence type="ECO:0000305" key="5"/>
<feature type="chain" id="PRO_0000289216" description="Lactosylceramide 1,3-N-acetyl-beta-D-glucosaminyltransferase B">
    <location>
        <begin position="1"/>
        <end position="377"/>
    </location>
</feature>
<feature type="topological domain" description="Cytoplasmic" evidence="4">
    <location>
        <begin position="1"/>
        <end position="13"/>
    </location>
</feature>
<feature type="transmembrane region" description="Helical; Signal-anchor for type II membrane protein" evidence="4">
    <location>
        <begin position="14"/>
        <end position="30"/>
    </location>
</feature>
<feature type="topological domain" description="Lumenal" evidence="4">
    <location>
        <begin position="31"/>
        <end position="377"/>
    </location>
</feature>
<feature type="glycosylation site" description="N-linked (GlcNAc...) asparagine" evidence="4">
    <location>
        <position position="56"/>
    </location>
</feature>
<feature type="glycosylation site" description="N-linked (GlcNAc...) asparagine" evidence="4">
    <location>
        <position position="167"/>
    </location>
</feature>
<feature type="glycosylation site" description="N-linked (GlcNAc...) asparagine" evidence="4">
    <location>
        <position position="275"/>
    </location>
</feature>
<protein>
    <recommendedName>
        <fullName>Lactosylceramide 1,3-N-acetyl-beta-D-glucosaminyltransferase B</fullName>
        <ecNumber evidence="2">2.4.1.206</ecNumber>
    </recommendedName>
    <alternativeName>
        <fullName>Lactotriaosylceramide synthase B</fullName>
        <shortName>Lc(3)Cer synthase B</shortName>
        <shortName>Lc3 synthase B</shortName>
    </alternativeName>
    <alternativeName>
        <fullName>UDP-GlcNAc:beta-Gal beta-1,3-N-acetylglucosaminyltransferase 5B</fullName>
        <shortName>BGnT-5B</shortName>
        <shortName>Beta-1,3-Gn-T5B</shortName>
        <shortName>Beta-1,3-N-acetylglucosaminyltransferase 5B</shortName>
        <shortName>Beta3Gn-T5B</shortName>
    </alternativeName>
</protein>
<keyword id="KW-0325">Glycoprotein</keyword>
<keyword id="KW-0328">Glycosyltransferase</keyword>
<keyword id="KW-0333">Golgi apparatus</keyword>
<keyword id="KW-0472">Membrane</keyword>
<keyword id="KW-1185">Reference proteome</keyword>
<keyword id="KW-0735">Signal-anchor</keyword>
<keyword id="KW-0808">Transferase</keyword>
<keyword id="KW-0812">Transmembrane</keyword>
<keyword id="KW-1133">Transmembrane helix</keyword>
<dbReference type="EC" id="2.4.1.206" evidence="2"/>
<dbReference type="EMBL" id="BC077332">
    <property type="protein sequence ID" value="AAH77332.1"/>
    <property type="molecule type" value="mRNA"/>
</dbReference>
<dbReference type="SMR" id="Q6DE15"/>
<dbReference type="CAZy" id="GT31">
    <property type="family name" value="Glycosyltransferase Family 31"/>
</dbReference>
<dbReference type="GlyCosmos" id="Q6DE15">
    <property type="glycosylation" value="3 sites, No reported glycans"/>
</dbReference>
<dbReference type="DNASU" id="446540"/>
<dbReference type="GeneID" id="446540"/>
<dbReference type="KEGG" id="xla:446540"/>
<dbReference type="AGR" id="Xenbase:XB-GENE-6255936"/>
<dbReference type="CTD" id="446540"/>
<dbReference type="Xenbase" id="XB-GENE-6255936">
    <property type="gene designation" value="b3gnt5.S"/>
</dbReference>
<dbReference type="OrthoDB" id="115198at2759"/>
<dbReference type="UniPathway" id="UPA00378"/>
<dbReference type="Proteomes" id="UP000186698">
    <property type="component" value="Chromosome 5S"/>
</dbReference>
<dbReference type="Bgee" id="446540">
    <property type="expression patterns" value="Expressed in egg cell and 19 other cell types or tissues"/>
</dbReference>
<dbReference type="GO" id="GO:0000139">
    <property type="term" value="C:Golgi membrane"/>
    <property type="evidence" value="ECO:0000318"/>
    <property type="project" value="GO_Central"/>
</dbReference>
<dbReference type="GO" id="GO:0016757">
    <property type="term" value="F:glycosyltransferase activity"/>
    <property type="evidence" value="ECO:0000318"/>
    <property type="project" value="GO_Central"/>
</dbReference>
<dbReference type="GO" id="GO:0047256">
    <property type="term" value="F:lactosylceramide 1,3-N-acetyl-beta-D-glucosaminyltransferase activity"/>
    <property type="evidence" value="ECO:0007669"/>
    <property type="project" value="UniProtKB-EC"/>
</dbReference>
<dbReference type="GO" id="GO:0006493">
    <property type="term" value="P:protein O-linked glycosylation"/>
    <property type="evidence" value="ECO:0000318"/>
    <property type="project" value="GO_Central"/>
</dbReference>
<dbReference type="FunFam" id="3.90.550.50:FF:000019">
    <property type="entry name" value="Hexosyltransferase"/>
    <property type="match status" value="1"/>
</dbReference>
<dbReference type="Gene3D" id="3.90.550.50">
    <property type="match status" value="1"/>
</dbReference>
<dbReference type="InterPro" id="IPR002659">
    <property type="entry name" value="Glyco_trans_31"/>
</dbReference>
<dbReference type="PANTHER" id="PTHR11214">
    <property type="entry name" value="BETA-1,3-N-ACETYLGLUCOSAMINYLTRANSFERASE"/>
    <property type="match status" value="1"/>
</dbReference>
<dbReference type="PANTHER" id="PTHR11214:SF21">
    <property type="entry name" value="LACTOSYLCERAMIDE 1,3-N-ACETYL-BETA-D-GLUCOSAMINYLTRANSFERASE"/>
    <property type="match status" value="1"/>
</dbReference>
<dbReference type="Pfam" id="PF01762">
    <property type="entry name" value="Galactosyl_T"/>
    <property type="match status" value="1"/>
</dbReference>
<accession>Q6DE15</accession>
<gene>
    <name type="primary">b3gnt5-b</name>
</gene>
<sequence>MLISARRLRRCQSLQLLASCFVLSLMALLVQEDNSLVNHVKSYSYRYLINSYNFVNDSLSVPRDRSDGAAGYRYLINNRHKCLNEDVLLLLFVKTAPENRRRRNAIRKTWGNEDYIRSRYAANIKVVFALGVERDPVKSHHTQQDLVNENKRFKDLIQQDFSDTFHNLTLKLLLQFGWVNSFCPSAKFIMSADDDIFVHTPNLVTYLKSLPIETQDFWIGRVHRGSPPIRSKASKYYVPYEMYPWSSYPDYTAGAAYVVSRDVAAKVYEASQTLNTSLYIDDVFMGICANKMGVVPQYHVYFSGEGKSPYHPCIYNKMMTSHGHLGDLDYLWRQATDSNVKSLSSGFLGNVYCKIVNIMLLCKIGYVDTYPCSAAWS</sequence>
<comment type="function">
    <text evidence="3">Beta-1,3-N-acetylglucosaminyltransferase that plays a key role in the synthesis of lacto- or neolacto-series carbohydrate chains on glycolipids.</text>
</comment>
<comment type="catalytic activity">
    <reaction evidence="3">
        <text>a beta-D-Gal-(1-&gt;4)-beta-D-Glc-(1&lt;-&gt;1)-Cer(d18:1(4E)) + UDP-N-acetyl-alpha-D-glucosamine = a beta-D-GlcNAc-(1-&gt;3)-beta-D-Gal-(1-&gt;4)-beta-D-Glc-(1&lt;-&gt;1)-Cer(d18:1(4E)) + UDP + H(+)</text>
        <dbReference type="Rhea" id="RHEA:13905"/>
        <dbReference type="ChEBI" id="CHEBI:15378"/>
        <dbReference type="ChEBI" id="CHEBI:17103"/>
        <dbReference type="ChEBI" id="CHEBI:17950"/>
        <dbReference type="ChEBI" id="CHEBI:57705"/>
        <dbReference type="ChEBI" id="CHEBI:58223"/>
        <dbReference type="EC" id="2.4.1.206"/>
    </reaction>
    <physiologicalReaction direction="left-to-right" evidence="3">
        <dbReference type="Rhea" id="RHEA:13906"/>
    </physiologicalReaction>
</comment>
<comment type="catalytic activity">
    <reaction evidence="3">
        <text>a neolactoside nLc4Cer(d18:1(4E)) + UDP-N-acetyl-alpha-D-glucosamine = a neolactoside IV(3)-beta-GlcNAc-nLc4Cer(d18:1(4E)) + UDP + H(+)</text>
        <dbReference type="Rhea" id="RHEA:23004"/>
        <dbReference type="ChEBI" id="CHEBI:15378"/>
        <dbReference type="ChEBI" id="CHEBI:17006"/>
        <dbReference type="ChEBI" id="CHEBI:57705"/>
        <dbReference type="ChEBI" id="CHEBI:58223"/>
        <dbReference type="ChEBI" id="CHEBI:142448"/>
    </reaction>
    <physiologicalReaction direction="left-to-right" evidence="3">
        <dbReference type="Rhea" id="RHEA:23005"/>
    </physiologicalReaction>
</comment>
<comment type="pathway">
    <text>Protein modification; protein glycosylation.</text>
</comment>
<comment type="subcellular location">
    <subcellularLocation>
        <location evidence="1">Golgi apparatus membrane</location>
        <topology evidence="1">Single-pass type II membrane protein</topology>
    </subcellularLocation>
</comment>
<comment type="similarity">
    <text evidence="5">Belongs to the glycosyltransferase 31 family.</text>
</comment>